<evidence type="ECO:0000255" key="1"/>
<evidence type="ECO:0000305" key="2"/>
<name>MPA93_POAPR</name>
<comment type="tissue specificity">
    <text>Pollen.</text>
</comment>
<comment type="allergen">
    <text>Causes an allergic reaction in human.</text>
</comment>
<comment type="miscellaneous">
    <text>Its C-terminus might be membrane-associated.</text>
</comment>
<comment type="similarity">
    <text evidence="2">Belongs to the Poa p IX/Phl p VI allergen family.</text>
</comment>
<feature type="signal peptide" evidence="1">
    <location>
        <begin position="1"/>
        <end position="22"/>
    </location>
</feature>
<feature type="chain" id="PRO_0000021749" description="Pollen allergen KBG 60">
    <location>
        <begin position="23"/>
        <end position="307"/>
    </location>
</feature>
<organism>
    <name type="scientific">Poa pratensis</name>
    <name type="common">Kentucky bluegrass</name>
    <name type="synonym">Phalaris japonica</name>
    <dbReference type="NCBI Taxonomy" id="4545"/>
    <lineage>
        <taxon>Eukaryota</taxon>
        <taxon>Viridiplantae</taxon>
        <taxon>Streptophyta</taxon>
        <taxon>Embryophyta</taxon>
        <taxon>Tracheophyta</taxon>
        <taxon>Spermatophyta</taxon>
        <taxon>Magnoliopsida</taxon>
        <taxon>Liliopsida</taxon>
        <taxon>Poales</taxon>
        <taxon>Poaceae</taxon>
        <taxon>BOP clade</taxon>
        <taxon>Pooideae</taxon>
        <taxon>Poodae</taxon>
        <taxon>Poeae</taxon>
        <taxon>Poeae Chloroplast Group 2 (Poeae type)</taxon>
        <taxon>Poodinae</taxon>
        <taxon>Poinae</taxon>
        <taxon>Poa</taxon>
    </lineage>
</organism>
<sequence length="307" mass="30530">MAVQKYTVALFLVALVVGPAASYAADLSYGAPATPAAPAAGYTPAAPAGAAPKATTDEQKMIEKINVGFKAAVAAAGGVPAANKYKTFVATFGAASNKAFAEALSTEPKGAAVDSSKAALTSKLDAAYKLAYKSAEGATPEAKYDDYVATLSEALRIIAGTLEVHGVKPAAEEVKATPAGELQVIDKVDAAFKVAATAANAAPANDKFTVFEAAFNDAIKASTGGAYQSYKFIPALEAAVKQSYAATVATAPAVKYTVFETALKKAITAMSQAQKAAKPAAAATGTATAAVGAATGAATAAAGGYKV</sequence>
<reference key="1">
    <citation type="journal article" date="1991" name="J. Biol. Chem.">
        <title>Nucleotide sequence analysis of three cDNAs coding for Poa p IX isoallergens of Kentucky bluegrass pollen.</title>
        <authorList>
            <person name="Silvanovich A."/>
            <person name="Astwood J."/>
            <person name="Zhang L."/>
            <person name="Olsen E."/>
            <person name="Kisil F.T."/>
            <person name="Sehon A.H."/>
            <person name="Mohapatra S.S."/>
            <person name="Hill R.D."/>
        </authorList>
    </citation>
    <scope>NUCLEOTIDE SEQUENCE [MRNA]</scope>
    <source>
        <tissue>Pollen</tissue>
    </source>
</reference>
<reference key="2">
    <citation type="journal article" date="1991" name="J. Immunol.">
        <title>Identification and characterization of the Poa p IX group of basic allergens of Kentucky bluegrass pollen.</title>
        <authorList>
            <person name="Olsen E."/>
            <person name="Zhang L."/>
            <person name="Hill R.D."/>
            <person name="Kisil F.T."/>
            <person name="Sehon A.H."/>
            <person name="Mohapatra S.S."/>
        </authorList>
    </citation>
    <scope>CHARACTERIZATION</scope>
</reference>
<protein>
    <recommendedName>
        <fullName>Pollen allergen KBG 60</fullName>
    </recommendedName>
    <alternativeName>
        <fullName>Allergen Poa p IX</fullName>
    </alternativeName>
    <alternativeName>
        <fullName>Pollen allergen Poa p 9</fullName>
    </alternativeName>
    <allergenName>Poa p 9</allergenName>
</protein>
<proteinExistence type="evidence at protein level"/>
<dbReference type="EMBL" id="M38344">
    <property type="protein sequence ID" value="AAA63457.1"/>
    <property type="molecule type" value="mRNA"/>
</dbReference>
<dbReference type="PIR" id="B39098">
    <property type="entry name" value="B39098"/>
</dbReference>
<dbReference type="SMR" id="P22286"/>
<dbReference type="Allergome" id="581">
    <property type="allergen name" value="Poa p 5"/>
</dbReference>
<dbReference type="CDD" id="cd12805">
    <property type="entry name" value="Allergen_V_VI"/>
    <property type="match status" value="1"/>
</dbReference>
<dbReference type="Gene3D" id="1.20.120.320">
    <property type="entry name" value="Group V grass pollen allergen"/>
    <property type="match status" value="2"/>
</dbReference>
<dbReference type="InterPro" id="IPR002914">
    <property type="entry name" value="Poa_pIX/Phl_pVI"/>
</dbReference>
<dbReference type="InterPro" id="IPR035506">
    <property type="entry name" value="Pollen_allergen/Os"/>
</dbReference>
<dbReference type="Pfam" id="PF01620">
    <property type="entry name" value="Pollen_allerg_2"/>
    <property type="match status" value="1"/>
</dbReference>
<dbReference type="PRINTS" id="PR00833">
    <property type="entry name" value="POAALLERGEN"/>
</dbReference>
<dbReference type="SUPFAM" id="SSF81736">
    <property type="entry name" value="Group V grass pollen allergen"/>
    <property type="match status" value="2"/>
</dbReference>
<accession>P22286</accession>
<keyword id="KW-0020">Allergen</keyword>
<keyword id="KW-0732">Signal</keyword>